<sequence>MTLYYIGILVVIIGLFSIFSGIIGFFRFPDFYTKLHAASVIESFAVPICLIGFACIELDMLNSIKLILAALLILLLNPVATHALGKASLLMKIRTYNTVLLKKIRK</sequence>
<proteinExistence type="inferred from homology"/>
<evidence type="ECO:0000305" key="1"/>
<organism>
    <name type="scientific">Rickettsia prowazekii (strain Madrid E)</name>
    <dbReference type="NCBI Taxonomy" id="272947"/>
    <lineage>
        <taxon>Bacteria</taxon>
        <taxon>Pseudomonadati</taxon>
        <taxon>Pseudomonadota</taxon>
        <taxon>Alphaproteobacteria</taxon>
        <taxon>Rickettsiales</taxon>
        <taxon>Rickettsiaceae</taxon>
        <taxon>Rickettsieae</taxon>
        <taxon>Rickettsia</taxon>
        <taxon>typhus group</taxon>
    </lineage>
</organism>
<keyword id="KW-1185">Reference proteome</keyword>
<accession>Q9ZDQ9</accession>
<gene>
    <name type="ordered locus">RP266</name>
</gene>
<dbReference type="EMBL" id="AJ235271">
    <property type="protein sequence ID" value="CAA14728.1"/>
    <property type="molecule type" value="Genomic_DNA"/>
</dbReference>
<dbReference type="PIR" id="F71681">
    <property type="entry name" value="F71681"/>
</dbReference>
<dbReference type="RefSeq" id="NP_220651.1">
    <property type="nucleotide sequence ID" value="NC_000963.1"/>
</dbReference>
<dbReference type="RefSeq" id="WP_004597332.1">
    <property type="nucleotide sequence ID" value="NC_000963.1"/>
</dbReference>
<dbReference type="SMR" id="Q9ZDQ9"/>
<dbReference type="STRING" id="272947.gene:17555347"/>
<dbReference type="EnsemblBacteria" id="CAA14728">
    <property type="protein sequence ID" value="CAA14728"/>
    <property type="gene ID" value="CAA14728"/>
</dbReference>
<dbReference type="KEGG" id="rpr:RP266"/>
<dbReference type="PATRIC" id="fig|272947.5.peg.273"/>
<dbReference type="eggNOG" id="COG1320">
    <property type="taxonomic scope" value="Bacteria"/>
</dbReference>
<dbReference type="HOGENOM" id="CLU_121334_2_2_5"/>
<dbReference type="OrthoDB" id="4427992at2"/>
<dbReference type="Proteomes" id="UP000002480">
    <property type="component" value="Chromosome"/>
</dbReference>
<dbReference type="GO" id="GO:0015385">
    <property type="term" value="F:sodium:proton antiporter activity"/>
    <property type="evidence" value="ECO:0007669"/>
    <property type="project" value="TreeGrafter"/>
</dbReference>
<dbReference type="InterPro" id="IPR005133">
    <property type="entry name" value="PhaG_MnhG_YufB"/>
</dbReference>
<dbReference type="NCBIfam" id="TIGR01300">
    <property type="entry name" value="CPA3_mnhG_phaG"/>
    <property type="match status" value="1"/>
</dbReference>
<dbReference type="NCBIfam" id="NF009317">
    <property type="entry name" value="PRK12674.2-1"/>
    <property type="match status" value="1"/>
</dbReference>
<dbReference type="PANTHER" id="PTHR34703">
    <property type="entry name" value="ANTIPORTER SUBUNIT MNHG2-RELATED"/>
    <property type="match status" value="1"/>
</dbReference>
<dbReference type="PANTHER" id="PTHR34703:SF1">
    <property type="entry name" value="ANTIPORTER SUBUNIT MNHG2-RELATED"/>
    <property type="match status" value="1"/>
</dbReference>
<dbReference type="Pfam" id="PF03334">
    <property type="entry name" value="PhaG_MnhG_YufB"/>
    <property type="match status" value="1"/>
</dbReference>
<name>Y266_RICPR</name>
<protein>
    <recommendedName>
        <fullName>UPF0091 protein RP266</fullName>
    </recommendedName>
</protein>
<comment type="similarity">
    <text evidence="1">Belongs to the UPF0091 family.</text>
</comment>
<reference key="1">
    <citation type="journal article" date="1998" name="Nature">
        <title>The genome sequence of Rickettsia prowazekii and the origin of mitochondria.</title>
        <authorList>
            <person name="Andersson S.G.E."/>
            <person name="Zomorodipour A."/>
            <person name="Andersson J.O."/>
            <person name="Sicheritz-Ponten T."/>
            <person name="Alsmark U.C.M."/>
            <person name="Podowski R.M."/>
            <person name="Naeslund A.K."/>
            <person name="Eriksson A.-S."/>
            <person name="Winkler H.H."/>
            <person name="Kurland C.G."/>
        </authorList>
    </citation>
    <scope>NUCLEOTIDE SEQUENCE [LARGE SCALE GENOMIC DNA]</scope>
    <source>
        <strain>Madrid E</strain>
    </source>
</reference>
<feature type="chain" id="PRO_0000184965" description="UPF0091 protein RP266">
    <location>
        <begin position="1"/>
        <end position="106"/>
    </location>
</feature>